<feature type="chain" id="PRO_0000279816" description="Probable potassium transport system protein Kup">
    <location>
        <begin position="1"/>
        <end position="636"/>
    </location>
</feature>
<feature type="transmembrane region" description="Helical" evidence="1">
    <location>
        <begin position="23"/>
        <end position="43"/>
    </location>
</feature>
<feature type="transmembrane region" description="Helical" evidence="1">
    <location>
        <begin position="63"/>
        <end position="83"/>
    </location>
</feature>
<feature type="transmembrane region" description="Helical" evidence="1">
    <location>
        <begin position="114"/>
        <end position="134"/>
    </location>
</feature>
<feature type="transmembrane region" description="Helical" evidence="1">
    <location>
        <begin position="150"/>
        <end position="170"/>
    </location>
</feature>
<feature type="transmembrane region" description="Helical" evidence="1">
    <location>
        <begin position="182"/>
        <end position="202"/>
    </location>
</feature>
<feature type="transmembrane region" description="Helical" evidence="1">
    <location>
        <begin position="217"/>
        <end position="237"/>
    </location>
</feature>
<feature type="transmembrane region" description="Helical" evidence="1">
    <location>
        <begin position="260"/>
        <end position="280"/>
    </location>
</feature>
<feature type="transmembrane region" description="Helical" evidence="1">
    <location>
        <begin position="298"/>
        <end position="318"/>
    </location>
</feature>
<feature type="transmembrane region" description="Helical" evidence="1">
    <location>
        <begin position="350"/>
        <end position="370"/>
    </location>
</feature>
<feature type="transmembrane region" description="Helical" evidence="1">
    <location>
        <begin position="379"/>
        <end position="399"/>
    </location>
</feature>
<feature type="transmembrane region" description="Helical" evidence="1">
    <location>
        <begin position="407"/>
        <end position="427"/>
    </location>
</feature>
<feature type="transmembrane region" description="Helical" evidence="1">
    <location>
        <begin position="432"/>
        <end position="452"/>
    </location>
</feature>
<accession>Q472H9</accession>
<evidence type="ECO:0000255" key="1">
    <source>
        <dbReference type="HAMAP-Rule" id="MF_01522"/>
    </source>
</evidence>
<keyword id="KW-0997">Cell inner membrane</keyword>
<keyword id="KW-1003">Cell membrane</keyword>
<keyword id="KW-0406">Ion transport</keyword>
<keyword id="KW-0472">Membrane</keyword>
<keyword id="KW-0630">Potassium</keyword>
<keyword id="KW-0633">Potassium transport</keyword>
<keyword id="KW-0769">Symport</keyword>
<keyword id="KW-0812">Transmembrane</keyword>
<keyword id="KW-1133">Transmembrane helix</keyword>
<keyword id="KW-0813">Transport</keyword>
<reference key="1">
    <citation type="journal article" date="2010" name="PLoS ONE">
        <title>The complete multipartite genome sequence of Cupriavidus necator JMP134, a versatile pollutant degrader.</title>
        <authorList>
            <person name="Lykidis A."/>
            <person name="Perez-Pantoja D."/>
            <person name="Ledger T."/>
            <person name="Mavromatis K."/>
            <person name="Anderson I.J."/>
            <person name="Ivanova N.N."/>
            <person name="Hooper S.D."/>
            <person name="Lapidus A."/>
            <person name="Lucas S."/>
            <person name="Gonzalez B."/>
            <person name="Kyrpides N.C."/>
        </authorList>
    </citation>
    <scope>NUCLEOTIDE SEQUENCE [LARGE SCALE GENOMIC DNA]</scope>
    <source>
        <strain>JMP134 / LMG 1197</strain>
    </source>
</reference>
<sequence length="636" mass="69682">MTTQSATTATSHYFVENPSTRALVIGAIGVVFGDIGTSPLYSLKECFSKEHGIPFSPDAVLGIISLLFWAMTIVVSIKYVVFVMRADNNGEGGVLALMALVLRTAAPRSRWAKVLMMLGIFGACMFYGDAVITPAISVLSAVEGLEIATPQLSRFVIPITLVILVALFLIQRNGTSVVGKLFGPVMVVWFVTLGLLGLYNLVQAPEILKAFNPYYGISFLIAHSLQAFIVLGSVFLVLTGAEALYVDMGHFGARPIRYGWFVLVMPCLILNYFGQGAMLLTNPAGAENPFYLMVPEPLLIPMVVLATCATVIASQAVISGAFSLTSQAIQLGFVPRMRVRYTSAAEIGQIYLPVINWILLVLVVAVVISFKKSENLAAAYGIAVTTTMVITTFLAAVVMRNVWKWNPALVTLLGLSFLLVDLAFFAANLLKVAEGGWFPLLLGSTAFFLLMTWYSGRKLLRARSLEDGIPLEPFIAGLLAHPPHRVEGTAVFLTGNTESVPVSLLHNLKHNRVLHERVVFLSFVTRDIPYVDDEQRLSCKDLGGGVFILKSDYGFKETPDVHKVLDLAQRKLGMHFELMETSFFIARESVIPSKLPGMSMWRESLFAWMHQNGAKPSDFFQIPANRVVELGTKVEI</sequence>
<gene>
    <name evidence="1" type="primary">kup</name>
    <name type="ordered locus">Reut_A1334</name>
</gene>
<dbReference type="EMBL" id="CP000090">
    <property type="protein sequence ID" value="AAZ60704.1"/>
    <property type="molecule type" value="Genomic_DNA"/>
</dbReference>
<dbReference type="STRING" id="264198.Reut_A1334"/>
<dbReference type="KEGG" id="reu:Reut_A1334"/>
<dbReference type="eggNOG" id="COG3158">
    <property type="taxonomic scope" value="Bacteria"/>
</dbReference>
<dbReference type="HOGENOM" id="CLU_008142_4_2_4"/>
<dbReference type="OrthoDB" id="9805577at2"/>
<dbReference type="GO" id="GO:0005886">
    <property type="term" value="C:plasma membrane"/>
    <property type="evidence" value="ECO:0007669"/>
    <property type="project" value="UniProtKB-SubCell"/>
</dbReference>
<dbReference type="GO" id="GO:0015079">
    <property type="term" value="F:potassium ion transmembrane transporter activity"/>
    <property type="evidence" value="ECO:0007669"/>
    <property type="project" value="UniProtKB-UniRule"/>
</dbReference>
<dbReference type="GO" id="GO:0015293">
    <property type="term" value="F:symporter activity"/>
    <property type="evidence" value="ECO:0007669"/>
    <property type="project" value="UniProtKB-UniRule"/>
</dbReference>
<dbReference type="HAMAP" id="MF_01522">
    <property type="entry name" value="Kup"/>
    <property type="match status" value="1"/>
</dbReference>
<dbReference type="InterPro" id="IPR003855">
    <property type="entry name" value="K+_transporter"/>
</dbReference>
<dbReference type="InterPro" id="IPR053952">
    <property type="entry name" value="K_trans_C"/>
</dbReference>
<dbReference type="InterPro" id="IPR053951">
    <property type="entry name" value="K_trans_N"/>
</dbReference>
<dbReference type="InterPro" id="IPR023051">
    <property type="entry name" value="Kup"/>
</dbReference>
<dbReference type="PANTHER" id="PTHR30540:SF79">
    <property type="entry name" value="LOW AFFINITY POTASSIUM TRANSPORT SYSTEM PROTEIN KUP"/>
    <property type="match status" value="1"/>
</dbReference>
<dbReference type="PANTHER" id="PTHR30540">
    <property type="entry name" value="OSMOTIC STRESS POTASSIUM TRANSPORTER"/>
    <property type="match status" value="1"/>
</dbReference>
<dbReference type="Pfam" id="PF02705">
    <property type="entry name" value="K_trans"/>
    <property type="match status" value="1"/>
</dbReference>
<dbReference type="Pfam" id="PF22776">
    <property type="entry name" value="K_trans_C"/>
    <property type="match status" value="1"/>
</dbReference>
<name>KUP_CUPPJ</name>
<proteinExistence type="inferred from homology"/>
<protein>
    <recommendedName>
        <fullName evidence="1">Probable potassium transport system protein Kup</fullName>
    </recommendedName>
</protein>
<organism>
    <name type="scientific">Cupriavidus pinatubonensis (strain JMP 134 / LMG 1197)</name>
    <name type="common">Cupriavidus necator (strain JMP 134)</name>
    <dbReference type="NCBI Taxonomy" id="264198"/>
    <lineage>
        <taxon>Bacteria</taxon>
        <taxon>Pseudomonadati</taxon>
        <taxon>Pseudomonadota</taxon>
        <taxon>Betaproteobacteria</taxon>
        <taxon>Burkholderiales</taxon>
        <taxon>Burkholderiaceae</taxon>
        <taxon>Cupriavidus</taxon>
    </lineage>
</organism>
<comment type="function">
    <text evidence="1">Transport of potassium into the cell. Likely operates as a K(+):H(+) symporter.</text>
</comment>
<comment type="catalytic activity">
    <reaction evidence="1">
        <text>K(+)(in) + H(+)(in) = K(+)(out) + H(+)(out)</text>
        <dbReference type="Rhea" id="RHEA:28490"/>
        <dbReference type="ChEBI" id="CHEBI:15378"/>
        <dbReference type="ChEBI" id="CHEBI:29103"/>
    </reaction>
    <physiologicalReaction direction="right-to-left" evidence="1">
        <dbReference type="Rhea" id="RHEA:28492"/>
    </physiologicalReaction>
</comment>
<comment type="subcellular location">
    <subcellularLocation>
        <location evidence="1">Cell inner membrane</location>
        <topology evidence="1">Multi-pass membrane protein</topology>
    </subcellularLocation>
</comment>
<comment type="similarity">
    <text evidence="1">Belongs to the HAK/KUP transporter (TC 2.A.72) family.</text>
</comment>